<comment type="function">
    <text evidence="1">Catalyzes the synthesis of GMP from XMP.</text>
</comment>
<comment type="catalytic activity">
    <reaction evidence="1">
        <text>XMP + L-glutamine + ATP + H2O = GMP + L-glutamate + AMP + diphosphate + 2 H(+)</text>
        <dbReference type="Rhea" id="RHEA:11680"/>
        <dbReference type="ChEBI" id="CHEBI:15377"/>
        <dbReference type="ChEBI" id="CHEBI:15378"/>
        <dbReference type="ChEBI" id="CHEBI:29985"/>
        <dbReference type="ChEBI" id="CHEBI:30616"/>
        <dbReference type="ChEBI" id="CHEBI:33019"/>
        <dbReference type="ChEBI" id="CHEBI:57464"/>
        <dbReference type="ChEBI" id="CHEBI:58115"/>
        <dbReference type="ChEBI" id="CHEBI:58359"/>
        <dbReference type="ChEBI" id="CHEBI:456215"/>
        <dbReference type="EC" id="6.3.5.2"/>
    </reaction>
</comment>
<comment type="pathway">
    <text evidence="1">Purine metabolism; GMP biosynthesis; GMP from XMP (L-Gln route): step 1/1.</text>
</comment>
<comment type="subunit">
    <text evidence="1">Homodimer.</text>
</comment>
<reference key="1">
    <citation type="submission" date="2008-05" db="EMBL/GenBank/DDBJ databases">
        <title>Complete sequence of chromosome 1 of Ralstonia pickettii 12J.</title>
        <authorList>
            <person name="Lucas S."/>
            <person name="Copeland A."/>
            <person name="Lapidus A."/>
            <person name="Glavina del Rio T."/>
            <person name="Dalin E."/>
            <person name="Tice H."/>
            <person name="Bruce D."/>
            <person name="Goodwin L."/>
            <person name="Pitluck S."/>
            <person name="Meincke L."/>
            <person name="Brettin T."/>
            <person name="Detter J.C."/>
            <person name="Han C."/>
            <person name="Kuske C.R."/>
            <person name="Schmutz J."/>
            <person name="Larimer F."/>
            <person name="Land M."/>
            <person name="Hauser L."/>
            <person name="Kyrpides N."/>
            <person name="Mikhailova N."/>
            <person name="Marsh T."/>
            <person name="Richardson P."/>
        </authorList>
    </citation>
    <scope>NUCLEOTIDE SEQUENCE [LARGE SCALE GENOMIC DNA]</scope>
    <source>
        <strain>12J</strain>
    </source>
</reference>
<dbReference type="EC" id="6.3.5.2" evidence="1"/>
<dbReference type="EMBL" id="CP001068">
    <property type="protein sequence ID" value="ACD26452.1"/>
    <property type="molecule type" value="Genomic_DNA"/>
</dbReference>
<dbReference type="SMR" id="B2UBD1"/>
<dbReference type="STRING" id="402626.Rpic_1308"/>
<dbReference type="MEROPS" id="C26.957"/>
<dbReference type="KEGG" id="rpi:Rpic_1308"/>
<dbReference type="PATRIC" id="fig|402626.5.peg.2514"/>
<dbReference type="eggNOG" id="COG0518">
    <property type="taxonomic scope" value="Bacteria"/>
</dbReference>
<dbReference type="eggNOG" id="COG0519">
    <property type="taxonomic scope" value="Bacteria"/>
</dbReference>
<dbReference type="HOGENOM" id="CLU_014340_0_5_4"/>
<dbReference type="UniPathway" id="UPA00189">
    <property type="reaction ID" value="UER00296"/>
</dbReference>
<dbReference type="GO" id="GO:0005829">
    <property type="term" value="C:cytosol"/>
    <property type="evidence" value="ECO:0007669"/>
    <property type="project" value="TreeGrafter"/>
</dbReference>
<dbReference type="GO" id="GO:0005524">
    <property type="term" value="F:ATP binding"/>
    <property type="evidence" value="ECO:0007669"/>
    <property type="project" value="UniProtKB-UniRule"/>
</dbReference>
<dbReference type="GO" id="GO:0003921">
    <property type="term" value="F:GMP synthase activity"/>
    <property type="evidence" value="ECO:0007669"/>
    <property type="project" value="InterPro"/>
</dbReference>
<dbReference type="CDD" id="cd01742">
    <property type="entry name" value="GATase1_GMP_Synthase"/>
    <property type="match status" value="1"/>
</dbReference>
<dbReference type="CDD" id="cd01997">
    <property type="entry name" value="GMP_synthase_C"/>
    <property type="match status" value="1"/>
</dbReference>
<dbReference type="FunFam" id="3.30.300.10:FF:000002">
    <property type="entry name" value="GMP synthase [glutamine-hydrolyzing]"/>
    <property type="match status" value="1"/>
</dbReference>
<dbReference type="FunFam" id="3.40.50.620:FF:000001">
    <property type="entry name" value="GMP synthase [glutamine-hydrolyzing]"/>
    <property type="match status" value="1"/>
</dbReference>
<dbReference type="FunFam" id="3.40.50.880:FF:000001">
    <property type="entry name" value="GMP synthase [glutamine-hydrolyzing]"/>
    <property type="match status" value="1"/>
</dbReference>
<dbReference type="Gene3D" id="3.30.300.10">
    <property type="match status" value="1"/>
</dbReference>
<dbReference type="Gene3D" id="3.40.50.880">
    <property type="match status" value="1"/>
</dbReference>
<dbReference type="Gene3D" id="3.40.50.620">
    <property type="entry name" value="HUPs"/>
    <property type="match status" value="1"/>
</dbReference>
<dbReference type="HAMAP" id="MF_00344">
    <property type="entry name" value="GMP_synthase"/>
    <property type="match status" value="1"/>
</dbReference>
<dbReference type="InterPro" id="IPR029062">
    <property type="entry name" value="Class_I_gatase-like"/>
</dbReference>
<dbReference type="InterPro" id="IPR017926">
    <property type="entry name" value="GATASE"/>
</dbReference>
<dbReference type="InterPro" id="IPR001674">
    <property type="entry name" value="GMP_synth_C"/>
</dbReference>
<dbReference type="InterPro" id="IPR004739">
    <property type="entry name" value="GMP_synth_GATase"/>
</dbReference>
<dbReference type="InterPro" id="IPR022955">
    <property type="entry name" value="GMP_synthase"/>
</dbReference>
<dbReference type="InterPro" id="IPR025777">
    <property type="entry name" value="GMPS_ATP_PPase_dom"/>
</dbReference>
<dbReference type="InterPro" id="IPR022310">
    <property type="entry name" value="NAD/GMP_synthase"/>
</dbReference>
<dbReference type="InterPro" id="IPR014729">
    <property type="entry name" value="Rossmann-like_a/b/a_fold"/>
</dbReference>
<dbReference type="NCBIfam" id="TIGR00884">
    <property type="entry name" value="guaA_Cterm"/>
    <property type="match status" value="1"/>
</dbReference>
<dbReference type="NCBIfam" id="TIGR00888">
    <property type="entry name" value="guaA_Nterm"/>
    <property type="match status" value="1"/>
</dbReference>
<dbReference type="NCBIfam" id="NF000848">
    <property type="entry name" value="PRK00074.1"/>
    <property type="match status" value="1"/>
</dbReference>
<dbReference type="PANTHER" id="PTHR11922:SF2">
    <property type="entry name" value="GMP SYNTHASE [GLUTAMINE-HYDROLYZING]"/>
    <property type="match status" value="1"/>
</dbReference>
<dbReference type="PANTHER" id="PTHR11922">
    <property type="entry name" value="GMP SYNTHASE-RELATED"/>
    <property type="match status" value="1"/>
</dbReference>
<dbReference type="Pfam" id="PF00117">
    <property type="entry name" value="GATase"/>
    <property type="match status" value="1"/>
</dbReference>
<dbReference type="Pfam" id="PF00958">
    <property type="entry name" value="GMP_synt_C"/>
    <property type="match status" value="1"/>
</dbReference>
<dbReference type="Pfam" id="PF02540">
    <property type="entry name" value="NAD_synthase"/>
    <property type="match status" value="1"/>
</dbReference>
<dbReference type="SUPFAM" id="SSF52402">
    <property type="entry name" value="Adenine nucleotide alpha hydrolases-like"/>
    <property type="match status" value="1"/>
</dbReference>
<dbReference type="SUPFAM" id="SSF52317">
    <property type="entry name" value="Class I glutamine amidotransferase-like"/>
    <property type="match status" value="1"/>
</dbReference>
<dbReference type="SUPFAM" id="SSF54810">
    <property type="entry name" value="GMP synthetase C-terminal dimerisation domain"/>
    <property type="match status" value="1"/>
</dbReference>
<dbReference type="PROSITE" id="PS51273">
    <property type="entry name" value="GATASE_TYPE_1"/>
    <property type="match status" value="1"/>
</dbReference>
<dbReference type="PROSITE" id="PS51553">
    <property type="entry name" value="GMPS_ATP_PPASE"/>
    <property type="match status" value="1"/>
</dbReference>
<sequence>MHDKVLILDFGSQVTQLIARRVREAHVYCEIHPNDVSDAFVREFAPKAIILSGSHASTYEDHQLRAPQAVWDLGVPVLGICYGMQTMAVQLGGKVEWSDHREFGYAEVRAHGHTRLLKDIQDFATPEGHGMLKVWMSHGDKVTELPPGFKLLASTPSCPVAGMADEARGYYAVQFHPEVTHTVQGRALLERFVLEIAGAKPDWVMRDHIDEAVKAIREQVGDEEVILGLSGGVDSSVAAALIHRAIGDQLTCVFVDHGLLRLDEGKMVMDMFAGRLHAKVVHVDASEQFLGHLAGVTDPEAKRKIIGREFVEVFQAEAKKLSNAKWLAQGTIYPDVVESGGTKTKKATTIKSHHNVGGLPETLGLKLLEPLRDLFKDEVRELGVALGLPHEMVYRHPFPGPGLGVRILGEVKREYADLLRRADAIFIEELRGTKATAQDAAAGLCGEGDVGKSWYDLTSQAFAVFLPIKSVGVMGDGRTYDYVTALRAVQTTDFMTAHWAHLPYALLGRVSNRIINEVRGLSRVVYDVSGKPPATIEWE</sequence>
<name>GUAA_RALPJ</name>
<organism>
    <name type="scientific">Ralstonia pickettii (strain 12J)</name>
    <dbReference type="NCBI Taxonomy" id="402626"/>
    <lineage>
        <taxon>Bacteria</taxon>
        <taxon>Pseudomonadati</taxon>
        <taxon>Pseudomonadota</taxon>
        <taxon>Betaproteobacteria</taxon>
        <taxon>Burkholderiales</taxon>
        <taxon>Burkholderiaceae</taxon>
        <taxon>Ralstonia</taxon>
    </lineage>
</organism>
<keyword id="KW-0067">ATP-binding</keyword>
<keyword id="KW-0315">Glutamine amidotransferase</keyword>
<keyword id="KW-0332">GMP biosynthesis</keyword>
<keyword id="KW-0436">Ligase</keyword>
<keyword id="KW-0547">Nucleotide-binding</keyword>
<keyword id="KW-0658">Purine biosynthesis</keyword>
<proteinExistence type="inferred from homology"/>
<accession>B2UBD1</accession>
<evidence type="ECO:0000255" key="1">
    <source>
        <dbReference type="HAMAP-Rule" id="MF_00344"/>
    </source>
</evidence>
<protein>
    <recommendedName>
        <fullName evidence="1">GMP synthase [glutamine-hydrolyzing]</fullName>
        <ecNumber evidence="1">6.3.5.2</ecNumber>
    </recommendedName>
    <alternativeName>
        <fullName evidence="1">GMP synthetase</fullName>
    </alternativeName>
    <alternativeName>
        <fullName evidence="1">Glutamine amidotransferase</fullName>
    </alternativeName>
</protein>
<feature type="chain" id="PRO_1000190251" description="GMP synthase [glutamine-hydrolyzing]">
    <location>
        <begin position="1"/>
        <end position="539"/>
    </location>
</feature>
<feature type="domain" description="Glutamine amidotransferase type-1" evidence="1">
    <location>
        <begin position="4"/>
        <end position="202"/>
    </location>
</feature>
<feature type="domain" description="GMPS ATP-PPase" evidence="1">
    <location>
        <begin position="203"/>
        <end position="395"/>
    </location>
</feature>
<feature type="active site" description="Nucleophile" evidence="1">
    <location>
        <position position="81"/>
    </location>
</feature>
<feature type="active site" evidence="1">
    <location>
        <position position="176"/>
    </location>
</feature>
<feature type="active site" evidence="1">
    <location>
        <position position="178"/>
    </location>
</feature>
<feature type="binding site" evidence="1">
    <location>
        <begin position="230"/>
        <end position="236"/>
    </location>
    <ligand>
        <name>ATP</name>
        <dbReference type="ChEBI" id="CHEBI:30616"/>
    </ligand>
</feature>
<gene>
    <name evidence="1" type="primary">guaA</name>
    <name type="ordered locus">Rpic_1308</name>
</gene>